<gene>
    <name evidence="1" type="primary">xseB</name>
    <name type="ordered locus">xcc-b100_1563</name>
</gene>
<proteinExistence type="inferred from homology"/>
<feature type="chain" id="PRO_1000119968" description="Exodeoxyribonuclease 7 small subunit">
    <location>
        <begin position="1"/>
        <end position="87"/>
    </location>
</feature>
<accession>B0RR28</accession>
<dbReference type="EC" id="3.1.11.6" evidence="1"/>
<dbReference type="EMBL" id="AM920689">
    <property type="protein sequence ID" value="CAP50913.1"/>
    <property type="molecule type" value="Genomic_DNA"/>
</dbReference>
<dbReference type="SMR" id="B0RR28"/>
<dbReference type="KEGG" id="xca:xcc-b100_1563"/>
<dbReference type="HOGENOM" id="CLU_145918_3_3_6"/>
<dbReference type="Proteomes" id="UP000001188">
    <property type="component" value="Chromosome"/>
</dbReference>
<dbReference type="GO" id="GO:0005829">
    <property type="term" value="C:cytosol"/>
    <property type="evidence" value="ECO:0007669"/>
    <property type="project" value="TreeGrafter"/>
</dbReference>
<dbReference type="GO" id="GO:0009318">
    <property type="term" value="C:exodeoxyribonuclease VII complex"/>
    <property type="evidence" value="ECO:0007669"/>
    <property type="project" value="InterPro"/>
</dbReference>
<dbReference type="GO" id="GO:0008855">
    <property type="term" value="F:exodeoxyribonuclease VII activity"/>
    <property type="evidence" value="ECO:0007669"/>
    <property type="project" value="UniProtKB-UniRule"/>
</dbReference>
<dbReference type="GO" id="GO:0006308">
    <property type="term" value="P:DNA catabolic process"/>
    <property type="evidence" value="ECO:0007669"/>
    <property type="project" value="UniProtKB-UniRule"/>
</dbReference>
<dbReference type="Gene3D" id="1.10.287.1040">
    <property type="entry name" value="Exonuclease VII, small subunit"/>
    <property type="match status" value="1"/>
</dbReference>
<dbReference type="HAMAP" id="MF_00337">
    <property type="entry name" value="Exonuc_7_S"/>
    <property type="match status" value="1"/>
</dbReference>
<dbReference type="InterPro" id="IPR003761">
    <property type="entry name" value="Exonuc_VII_S"/>
</dbReference>
<dbReference type="InterPro" id="IPR037004">
    <property type="entry name" value="Exonuc_VII_ssu_sf"/>
</dbReference>
<dbReference type="NCBIfam" id="NF002140">
    <property type="entry name" value="PRK00977.1-4"/>
    <property type="match status" value="1"/>
</dbReference>
<dbReference type="NCBIfam" id="TIGR01280">
    <property type="entry name" value="xseB"/>
    <property type="match status" value="1"/>
</dbReference>
<dbReference type="PANTHER" id="PTHR34137">
    <property type="entry name" value="EXODEOXYRIBONUCLEASE 7 SMALL SUBUNIT"/>
    <property type="match status" value="1"/>
</dbReference>
<dbReference type="PANTHER" id="PTHR34137:SF1">
    <property type="entry name" value="EXODEOXYRIBONUCLEASE 7 SMALL SUBUNIT"/>
    <property type="match status" value="1"/>
</dbReference>
<dbReference type="Pfam" id="PF02609">
    <property type="entry name" value="Exonuc_VII_S"/>
    <property type="match status" value="1"/>
</dbReference>
<dbReference type="PIRSF" id="PIRSF006488">
    <property type="entry name" value="Exonuc_VII_S"/>
    <property type="match status" value="1"/>
</dbReference>
<dbReference type="SUPFAM" id="SSF116842">
    <property type="entry name" value="XseB-like"/>
    <property type="match status" value="1"/>
</dbReference>
<comment type="function">
    <text evidence="1">Bidirectionally degrades single-stranded DNA into large acid-insoluble oligonucleotides, which are then degraded further into small acid-soluble oligonucleotides.</text>
</comment>
<comment type="catalytic activity">
    <reaction evidence="1">
        <text>Exonucleolytic cleavage in either 5'- to 3'- or 3'- to 5'-direction to yield nucleoside 5'-phosphates.</text>
        <dbReference type="EC" id="3.1.11.6"/>
    </reaction>
</comment>
<comment type="subunit">
    <text evidence="1">Heterooligomer composed of large and small subunits.</text>
</comment>
<comment type="subcellular location">
    <subcellularLocation>
        <location evidence="1">Cytoplasm</location>
    </subcellularLocation>
</comment>
<comment type="similarity">
    <text evidence="1">Belongs to the XseB family.</text>
</comment>
<name>EX7S_XANCB</name>
<evidence type="ECO:0000255" key="1">
    <source>
        <dbReference type="HAMAP-Rule" id="MF_00337"/>
    </source>
</evidence>
<keyword id="KW-0963">Cytoplasm</keyword>
<keyword id="KW-0269">Exonuclease</keyword>
<keyword id="KW-0378">Hydrolase</keyword>
<keyword id="KW-0540">Nuclease</keyword>
<reference key="1">
    <citation type="journal article" date="2008" name="J. Biotechnol.">
        <title>The genome of Xanthomonas campestris pv. campestris B100 and its use for the reconstruction of metabolic pathways involved in xanthan biosynthesis.</title>
        <authorList>
            <person name="Vorhoelter F.-J."/>
            <person name="Schneiker S."/>
            <person name="Goesmann A."/>
            <person name="Krause L."/>
            <person name="Bekel T."/>
            <person name="Kaiser O."/>
            <person name="Linke B."/>
            <person name="Patschkowski T."/>
            <person name="Rueckert C."/>
            <person name="Schmid J."/>
            <person name="Sidhu V.K."/>
            <person name="Sieber V."/>
            <person name="Tauch A."/>
            <person name="Watt S.A."/>
            <person name="Weisshaar B."/>
            <person name="Becker A."/>
            <person name="Niehaus K."/>
            <person name="Puehler A."/>
        </authorList>
    </citation>
    <scope>NUCLEOTIDE SEQUENCE [LARGE SCALE GENOMIC DNA]</scope>
    <source>
        <strain>B100</strain>
    </source>
</reference>
<protein>
    <recommendedName>
        <fullName evidence="1">Exodeoxyribonuclease 7 small subunit</fullName>
        <ecNumber evidence="1">3.1.11.6</ecNumber>
    </recommendedName>
    <alternativeName>
        <fullName evidence="1">Exodeoxyribonuclease VII small subunit</fullName>
        <shortName evidence="1">Exonuclease VII small subunit</shortName>
    </alternativeName>
</protein>
<sequence length="87" mass="9754">MAKKSLNESSPVARFEQSLEELEQLVQKMEVGEMSLEQSLTAYERGIGLYRDCQQALEQAELRVRLVTDPARPEQAEAFEPPSLDGG</sequence>
<organism>
    <name type="scientific">Xanthomonas campestris pv. campestris (strain B100)</name>
    <dbReference type="NCBI Taxonomy" id="509169"/>
    <lineage>
        <taxon>Bacteria</taxon>
        <taxon>Pseudomonadati</taxon>
        <taxon>Pseudomonadota</taxon>
        <taxon>Gammaproteobacteria</taxon>
        <taxon>Lysobacterales</taxon>
        <taxon>Lysobacteraceae</taxon>
        <taxon>Xanthomonas</taxon>
    </lineage>
</organism>